<name>RLMN_MARMS</name>
<dbReference type="EC" id="2.1.1.192" evidence="1"/>
<dbReference type="EMBL" id="CP000749">
    <property type="protein sequence ID" value="ABR70282.1"/>
    <property type="molecule type" value="Genomic_DNA"/>
</dbReference>
<dbReference type="SMR" id="A6VV03"/>
<dbReference type="STRING" id="400668.Mmwyl1_1353"/>
<dbReference type="KEGG" id="mmw:Mmwyl1_1353"/>
<dbReference type="eggNOG" id="COG0820">
    <property type="taxonomic scope" value="Bacteria"/>
</dbReference>
<dbReference type="HOGENOM" id="CLU_029101_0_0_6"/>
<dbReference type="OrthoDB" id="9793973at2"/>
<dbReference type="GO" id="GO:0005737">
    <property type="term" value="C:cytoplasm"/>
    <property type="evidence" value="ECO:0007669"/>
    <property type="project" value="UniProtKB-SubCell"/>
</dbReference>
<dbReference type="GO" id="GO:0051539">
    <property type="term" value="F:4 iron, 4 sulfur cluster binding"/>
    <property type="evidence" value="ECO:0007669"/>
    <property type="project" value="UniProtKB-UniRule"/>
</dbReference>
<dbReference type="GO" id="GO:0046872">
    <property type="term" value="F:metal ion binding"/>
    <property type="evidence" value="ECO:0007669"/>
    <property type="project" value="UniProtKB-KW"/>
</dbReference>
<dbReference type="GO" id="GO:0070040">
    <property type="term" value="F:rRNA (adenine(2503)-C2-)-methyltransferase activity"/>
    <property type="evidence" value="ECO:0007669"/>
    <property type="project" value="UniProtKB-UniRule"/>
</dbReference>
<dbReference type="GO" id="GO:0019843">
    <property type="term" value="F:rRNA binding"/>
    <property type="evidence" value="ECO:0007669"/>
    <property type="project" value="UniProtKB-UniRule"/>
</dbReference>
<dbReference type="GO" id="GO:0002935">
    <property type="term" value="F:tRNA (adenine(37)-C2)-methyltransferase activity"/>
    <property type="evidence" value="ECO:0007669"/>
    <property type="project" value="UniProtKB-UniRule"/>
</dbReference>
<dbReference type="GO" id="GO:0000049">
    <property type="term" value="F:tRNA binding"/>
    <property type="evidence" value="ECO:0007669"/>
    <property type="project" value="UniProtKB-UniRule"/>
</dbReference>
<dbReference type="GO" id="GO:0070475">
    <property type="term" value="P:rRNA base methylation"/>
    <property type="evidence" value="ECO:0007669"/>
    <property type="project" value="UniProtKB-UniRule"/>
</dbReference>
<dbReference type="GO" id="GO:0030488">
    <property type="term" value="P:tRNA methylation"/>
    <property type="evidence" value="ECO:0007669"/>
    <property type="project" value="UniProtKB-UniRule"/>
</dbReference>
<dbReference type="CDD" id="cd01335">
    <property type="entry name" value="Radical_SAM"/>
    <property type="match status" value="1"/>
</dbReference>
<dbReference type="FunFam" id="1.10.150.530:FF:000003">
    <property type="entry name" value="Dual-specificity RNA methyltransferase RlmN"/>
    <property type="match status" value="1"/>
</dbReference>
<dbReference type="FunFam" id="3.20.20.70:FF:000008">
    <property type="entry name" value="Dual-specificity RNA methyltransferase RlmN"/>
    <property type="match status" value="1"/>
</dbReference>
<dbReference type="Gene3D" id="1.10.150.530">
    <property type="match status" value="1"/>
</dbReference>
<dbReference type="Gene3D" id="3.20.20.70">
    <property type="entry name" value="Aldolase class I"/>
    <property type="match status" value="1"/>
</dbReference>
<dbReference type="HAMAP" id="MF_01849">
    <property type="entry name" value="RNA_methyltr_RlmN"/>
    <property type="match status" value="1"/>
</dbReference>
<dbReference type="InterPro" id="IPR013785">
    <property type="entry name" value="Aldolase_TIM"/>
</dbReference>
<dbReference type="InterPro" id="IPR006638">
    <property type="entry name" value="Elp3/MiaA/NifB-like_rSAM"/>
</dbReference>
<dbReference type="InterPro" id="IPR040072">
    <property type="entry name" value="Methyltransferase_A"/>
</dbReference>
<dbReference type="InterPro" id="IPR048641">
    <property type="entry name" value="RlmN_N"/>
</dbReference>
<dbReference type="InterPro" id="IPR027492">
    <property type="entry name" value="RNA_MTrfase_RlmN"/>
</dbReference>
<dbReference type="InterPro" id="IPR004383">
    <property type="entry name" value="rRNA_lsu_MTrfase_RlmN/Cfr"/>
</dbReference>
<dbReference type="InterPro" id="IPR007197">
    <property type="entry name" value="rSAM"/>
</dbReference>
<dbReference type="NCBIfam" id="TIGR00048">
    <property type="entry name" value="rRNA_mod_RlmN"/>
    <property type="match status" value="1"/>
</dbReference>
<dbReference type="PANTHER" id="PTHR30544">
    <property type="entry name" value="23S RRNA METHYLTRANSFERASE"/>
    <property type="match status" value="1"/>
</dbReference>
<dbReference type="PANTHER" id="PTHR30544:SF5">
    <property type="entry name" value="RADICAL SAM CORE DOMAIN-CONTAINING PROTEIN"/>
    <property type="match status" value="1"/>
</dbReference>
<dbReference type="Pfam" id="PF04055">
    <property type="entry name" value="Radical_SAM"/>
    <property type="match status" value="1"/>
</dbReference>
<dbReference type="Pfam" id="PF21016">
    <property type="entry name" value="RlmN_N"/>
    <property type="match status" value="1"/>
</dbReference>
<dbReference type="PIRSF" id="PIRSF006004">
    <property type="entry name" value="CHP00048"/>
    <property type="match status" value="1"/>
</dbReference>
<dbReference type="SFLD" id="SFLDF00275">
    <property type="entry name" value="adenosine_C2_methyltransferase"/>
    <property type="match status" value="1"/>
</dbReference>
<dbReference type="SFLD" id="SFLDS00029">
    <property type="entry name" value="Radical_SAM"/>
    <property type="match status" value="1"/>
</dbReference>
<dbReference type="SMART" id="SM00729">
    <property type="entry name" value="Elp3"/>
    <property type="match status" value="1"/>
</dbReference>
<dbReference type="SUPFAM" id="SSF102114">
    <property type="entry name" value="Radical SAM enzymes"/>
    <property type="match status" value="1"/>
</dbReference>
<dbReference type="PROSITE" id="PS51918">
    <property type="entry name" value="RADICAL_SAM"/>
    <property type="match status" value="1"/>
</dbReference>
<gene>
    <name evidence="1" type="primary">rlmN</name>
    <name type="ordered locus">Mmwyl1_1353</name>
</gene>
<keyword id="KW-0004">4Fe-4S</keyword>
<keyword id="KW-0963">Cytoplasm</keyword>
<keyword id="KW-1015">Disulfide bond</keyword>
<keyword id="KW-0408">Iron</keyword>
<keyword id="KW-0411">Iron-sulfur</keyword>
<keyword id="KW-0479">Metal-binding</keyword>
<keyword id="KW-0489">Methyltransferase</keyword>
<keyword id="KW-0698">rRNA processing</keyword>
<keyword id="KW-0949">S-adenosyl-L-methionine</keyword>
<keyword id="KW-0808">Transferase</keyword>
<keyword id="KW-0819">tRNA processing</keyword>
<proteinExistence type="inferred from homology"/>
<reference key="1">
    <citation type="submission" date="2007-06" db="EMBL/GenBank/DDBJ databases">
        <title>Complete sequence of Marinomonas sp. MWYL1.</title>
        <authorList>
            <consortium name="US DOE Joint Genome Institute"/>
            <person name="Copeland A."/>
            <person name="Lucas S."/>
            <person name="Lapidus A."/>
            <person name="Barry K."/>
            <person name="Glavina del Rio T."/>
            <person name="Dalin E."/>
            <person name="Tice H."/>
            <person name="Pitluck S."/>
            <person name="Kiss H."/>
            <person name="Brettin T."/>
            <person name="Bruce D."/>
            <person name="Detter J.C."/>
            <person name="Han C."/>
            <person name="Schmutz J."/>
            <person name="Larimer F."/>
            <person name="Land M."/>
            <person name="Hauser L."/>
            <person name="Kyrpides N."/>
            <person name="Kim E."/>
            <person name="Johnston A.W.B."/>
            <person name="Todd J.D."/>
            <person name="Rogers R."/>
            <person name="Wexler M."/>
            <person name="Bond P.L."/>
            <person name="Li Y."/>
            <person name="Richardson P."/>
        </authorList>
    </citation>
    <scope>NUCLEOTIDE SEQUENCE [LARGE SCALE GENOMIC DNA]</scope>
    <source>
        <strain>MWYL1</strain>
    </source>
</reference>
<sequence>MTDIKKVNLLGLSPEKLIEFFESIGEKKFRATQVIKWIHQKGAESFEEMTDVSKALRAKLEQICEIRGPEVVSQNISTDGTRKWIIRTEGGKNDCVETVLIPDGDRATLCVSSQVGCSLDCSFCSTGKQGFNRNLTPAEIIGQVWIAIKSFGPMDPNGPRRVTNVVMMGMGEPLMNFEPVVDAMILMMHDHAYGLSKRRVTLSTSGVVPKIYELVKRTDVSLAISLHAPNDALRNELVPINKKYPIAELLEACQFYLENLPDKRHITIEYTLMSGVNDNEEQAHELAELLKVLECKINLIPFNPFPHSGYEKPSNNRTRRFQKILADAGYTVTVRTTRGDDIDAACGQLVGDFHDKTRRSQKYIELREVKS</sequence>
<evidence type="ECO:0000255" key="1">
    <source>
        <dbReference type="HAMAP-Rule" id="MF_01849"/>
    </source>
</evidence>
<evidence type="ECO:0000255" key="2">
    <source>
        <dbReference type="PROSITE-ProRule" id="PRU01266"/>
    </source>
</evidence>
<accession>A6VV03</accession>
<comment type="function">
    <text evidence="1">Specifically methylates position 2 of adenine 2503 in 23S rRNA and position 2 of adenine 37 in tRNAs. m2A2503 modification seems to play a crucial role in the proofreading step occurring at the peptidyl transferase center and thus would serve to optimize ribosomal fidelity.</text>
</comment>
<comment type="catalytic activity">
    <reaction evidence="1">
        <text>adenosine(2503) in 23S rRNA + 2 reduced [2Fe-2S]-[ferredoxin] + 2 S-adenosyl-L-methionine = 2-methyladenosine(2503) in 23S rRNA + 5'-deoxyadenosine + L-methionine + 2 oxidized [2Fe-2S]-[ferredoxin] + S-adenosyl-L-homocysteine</text>
        <dbReference type="Rhea" id="RHEA:42916"/>
        <dbReference type="Rhea" id="RHEA-COMP:10000"/>
        <dbReference type="Rhea" id="RHEA-COMP:10001"/>
        <dbReference type="Rhea" id="RHEA-COMP:10152"/>
        <dbReference type="Rhea" id="RHEA-COMP:10282"/>
        <dbReference type="ChEBI" id="CHEBI:17319"/>
        <dbReference type="ChEBI" id="CHEBI:33737"/>
        <dbReference type="ChEBI" id="CHEBI:33738"/>
        <dbReference type="ChEBI" id="CHEBI:57844"/>
        <dbReference type="ChEBI" id="CHEBI:57856"/>
        <dbReference type="ChEBI" id="CHEBI:59789"/>
        <dbReference type="ChEBI" id="CHEBI:74411"/>
        <dbReference type="ChEBI" id="CHEBI:74497"/>
        <dbReference type="EC" id="2.1.1.192"/>
    </reaction>
</comment>
<comment type="catalytic activity">
    <reaction evidence="1">
        <text>adenosine(37) in tRNA + 2 reduced [2Fe-2S]-[ferredoxin] + 2 S-adenosyl-L-methionine = 2-methyladenosine(37) in tRNA + 5'-deoxyadenosine + L-methionine + 2 oxidized [2Fe-2S]-[ferredoxin] + S-adenosyl-L-homocysteine</text>
        <dbReference type="Rhea" id="RHEA:43332"/>
        <dbReference type="Rhea" id="RHEA-COMP:10000"/>
        <dbReference type="Rhea" id="RHEA-COMP:10001"/>
        <dbReference type="Rhea" id="RHEA-COMP:10162"/>
        <dbReference type="Rhea" id="RHEA-COMP:10485"/>
        <dbReference type="ChEBI" id="CHEBI:17319"/>
        <dbReference type="ChEBI" id="CHEBI:33737"/>
        <dbReference type="ChEBI" id="CHEBI:33738"/>
        <dbReference type="ChEBI" id="CHEBI:57844"/>
        <dbReference type="ChEBI" id="CHEBI:57856"/>
        <dbReference type="ChEBI" id="CHEBI:59789"/>
        <dbReference type="ChEBI" id="CHEBI:74411"/>
        <dbReference type="ChEBI" id="CHEBI:74497"/>
        <dbReference type="EC" id="2.1.1.192"/>
    </reaction>
</comment>
<comment type="cofactor">
    <cofactor evidence="1">
        <name>[4Fe-4S] cluster</name>
        <dbReference type="ChEBI" id="CHEBI:49883"/>
    </cofactor>
    <text evidence="1">Binds 1 [4Fe-4S] cluster. The cluster is coordinated with 3 cysteines and an exchangeable S-adenosyl-L-methionine.</text>
</comment>
<comment type="subcellular location">
    <subcellularLocation>
        <location evidence="1">Cytoplasm</location>
    </subcellularLocation>
</comment>
<comment type="miscellaneous">
    <text evidence="1">Reaction proceeds by a ping-pong mechanism involving intermediate methylation of a conserved cysteine residue.</text>
</comment>
<comment type="similarity">
    <text evidence="1">Belongs to the radical SAM superfamily. RlmN family.</text>
</comment>
<organism>
    <name type="scientific">Marinomonas sp. (strain MWYL1)</name>
    <dbReference type="NCBI Taxonomy" id="400668"/>
    <lineage>
        <taxon>Bacteria</taxon>
        <taxon>Pseudomonadati</taxon>
        <taxon>Pseudomonadota</taxon>
        <taxon>Gammaproteobacteria</taxon>
        <taxon>Oceanospirillales</taxon>
        <taxon>Oceanospirillaceae</taxon>
        <taxon>Marinomonas</taxon>
    </lineage>
</organism>
<feature type="chain" id="PRO_0000350248" description="Dual-specificity RNA methyltransferase RlmN">
    <location>
        <begin position="1"/>
        <end position="371"/>
    </location>
</feature>
<feature type="domain" description="Radical SAM core" evidence="2">
    <location>
        <begin position="103"/>
        <end position="341"/>
    </location>
</feature>
<feature type="active site" description="Proton acceptor" evidence="1">
    <location>
        <position position="97"/>
    </location>
</feature>
<feature type="active site" description="S-methylcysteine intermediate" evidence="1">
    <location>
        <position position="346"/>
    </location>
</feature>
<feature type="binding site" evidence="1">
    <location>
        <position position="117"/>
    </location>
    <ligand>
        <name>[4Fe-4S] cluster</name>
        <dbReference type="ChEBI" id="CHEBI:49883"/>
        <note>4Fe-4S-S-AdoMet</note>
    </ligand>
</feature>
<feature type="binding site" evidence="1">
    <location>
        <position position="121"/>
    </location>
    <ligand>
        <name>[4Fe-4S] cluster</name>
        <dbReference type="ChEBI" id="CHEBI:49883"/>
        <note>4Fe-4S-S-AdoMet</note>
    </ligand>
</feature>
<feature type="binding site" evidence="1">
    <location>
        <position position="124"/>
    </location>
    <ligand>
        <name>[4Fe-4S] cluster</name>
        <dbReference type="ChEBI" id="CHEBI:49883"/>
        <note>4Fe-4S-S-AdoMet</note>
    </ligand>
</feature>
<feature type="binding site" evidence="1">
    <location>
        <begin position="171"/>
        <end position="172"/>
    </location>
    <ligand>
        <name>S-adenosyl-L-methionine</name>
        <dbReference type="ChEBI" id="CHEBI:59789"/>
    </ligand>
</feature>
<feature type="binding site" evidence="1">
    <location>
        <position position="203"/>
    </location>
    <ligand>
        <name>S-adenosyl-L-methionine</name>
        <dbReference type="ChEBI" id="CHEBI:59789"/>
    </ligand>
</feature>
<feature type="binding site" evidence="1">
    <location>
        <begin position="225"/>
        <end position="227"/>
    </location>
    <ligand>
        <name>S-adenosyl-L-methionine</name>
        <dbReference type="ChEBI" id="CHEBI:59789"/>
    </ligand>
</feature>
<feature type="binding site" evidence="1">
    <location>
        <position position="303"/>
    </location>
    <ligand>
        <name>S-adenosyl-L-methionine</name>
        <dbReference type="ChEBI" id="CHEBI:59789"/>
    </ligand>
</feature>
<feature type="disulfide bond" description="(transient)" evidence="1">
    <location>
        <begin position="110"/>
        <end position="346"/>
    </location>
</feature>
<protein>
    <recommendedName>
        <fullName evidence="1">Dual-specificity RNA methyltransferase RlmN</fullName>
        <ecNumber evidence="1">2.1.1.192</ecNumber>
    </recommendedName>
    <alternativeName>
        <fullName evidence="1">23S rRNA (adenine(2503)-C(2))-methyltransferase</fullName>
    </alternativeName>
    <alternativeName>
        <fullName evidence="1">23S rRNA m2A2503 methyltransferase</fullName>
    </alternativeName>
    <alternativeName>
        <fullName evidence="1">Ribosomal RNA large subunit methyltransferase N</fullName>
    </alternativeName>
    <alternativeName>
        <fullName evidence="1">tRNA (adenine(37)-C(2))-methyltransferase</fullName>
    </alternativeName>
    <alternativeName>
        <fullName evidence="1">tRNA m2A37 methyltransferase</fullName>
    </alternativeName>
</protein>